<comment type="function">
    <text evidence="1">This is one of the proteins that bind and probably mediate the attachment of the 5S RNA into the large ribosomal subunit, where it forms part of the central protuberance.</text>
</comment>
<comment type="subunit">
    <text evidence="1">Part of the 50S ribosomal subunit; part of the 5S rRNA/L5/L18/L25 subcomplex. Contacts the 5S and 23S rRNAs.</text>
</comment>
<comment type="similarity">
    <text evidence="1">Belongs to the universal ribosomal protein uL18 family.</text>
</comment>
<name>RL18_UREP2</name>
<proteinExistence type="inferred from homology"/>
<feature type="chain" id="PRO_1000086694" description="Large ribosomal subunit protein uL18">
    <location>
        <begin position="1"/>
        <end position="121"/>
    </location>
</feature>
<sequence>MKRINFSRAKQRALRAKRLHVKIRNLQLAANKPVLVITKTNAHIWAQLICYNKNITLASSSSVQLDLQNGNKDNARLVGVDIAKKALAQGFKQVIFNKNGAKYHGRIKALADAAREAGLEF</sequence>
<reference key="1">
    <citation type="submission" date="2008-02" db="EMBL/GenBank/DDBJ databases">
        <title>Genome sequence of Ureaplasma parvum serovar 3.</title>
        <authorList>
            <person name="Methe B.A."/>
            <person name="Glass J."/>
            <person name="Waites K."/>
            <person name="Shrivastava S."/>
        </authorList>
    </citation>
    <scope>NUCLEOTIDE SEQUENCE [LARGE SCALE GENOMIC DNA]</scope>
    <source>
        <strain>ATCC 27815 / 27 / NCTC 11736</strain>
    </source>
</reference>
<keyword id="KW-0687">Ribonucleoprotein</keyword>
<keyword id="KW-0689">Ribosomal protein</keyword>
<keyword id="KW-0694">RNA-binding</keyword>
<keyword id="KW-0699">rRNA-binding</keyword>
<evidence type="ECO:0000255" key="1">
    <source>
        <dbReference type="HAMAP-Rule" id="MF_01337"/>
    </source>
</evidence>
<evidence type="ECO:0000305" key="2"/>
<accession>B1AIN6</accession>
<dbReference type="EMBL" id="CP000942">
    <property type="protein sequence ID" value="ACA32744.1"/>
    <property type="molecule type" value="Genomic_DNA"/>
</dbReference>
<dbReference type="RefSeq" id="WP_006688827.1">
    <property type="nucleotide sequence ID" value="NC_010503.1"/>
</dbReference>
<dbReference type="SMR" id="B1AIN6"/>
<dbReference type="GeneID" id="29672667"/>
<dbReference type="KEGG" id="upa:UPA3_0255"/>
<dbReference type="HOGENOM" id="CLU_098841_0_1_14"/>
<dbReference type="Proteomes" id="UP000002162">
    <property type="component" value="Chromosome"/>
</dbReference>
<dbReference type="GO" id="GO:0022625">
    <property type="term" value="C:cytosolic large ribosomal subunit"/>
    <property type="evidence" value="ECO:0007669"/>
    <property type="project" value="TreeGrafter"/>
</dbReference>
<dbReference type="GO" id="GO:0008097">
    <property type="term" value="F:5S rRNA binding"/>
    <property type="evidence" value="ECO:0007669"/>
    <property type="project" value="TreeGrafter"/>
</dbReference>
<dbReference type="GO" id="GO:0003735">
    <property type="term" value="F:structural constituent of ribosome"/>
    <property type="evidence" value="ECO:0007669"/>
    <property type="project" value="InterPro"/>
</dbReference>
<dbReference type="GO" id="GO:0006412">
    <property type="term" value="P:translation"/>
    <property type="evidence" value="ECO:0007669"/>
    <property type="project" value="UniProtKB-UniRule"/>
</dbReference>
<dbReference type="CDD" id="cd00432">
    <property type="entry name" value="Ribosomal_L18_L5e"/>
    <property type="match status" value="1"/>
</dbReference>
<dbReference type="Gene3D" id="3.30.420.100">
    <property type="match status" value="1"/>
</dbReference>
<dbReference type="HAMAP" id="MF_01337_B">
    <property type="entry name" value="Ribosomal_uL18_B"/>
    <property type="match status" value="1"/>
</dbReference>
<dbReference type="InterPro" id="IPR004389">
    <property type="entry name" value="Ribosomal_uL18_bac-type"/>
</dbReference>
<dbReference type="InterPro" id="IPR005484">
    <property type="entry name" value="Ribosomal_uL18_bac/euk"/>
</dbReference>
<dbReference type="NCBIfam" id="TIGR00060">
    <property type="entry name" value="L18_bact"/>
    <property type="match status" value="1"/>
</dbReference>
<dbReference type="PANTHER" id="PTHR12899">
    <property type="entry name" value="39S RIBOSOMAL PROTEIN L18, MITOCHONDRIAL"/>
    <property type="match status" value="1"/>
</dbReference>
<dbReference type="PANTHER" id="PTHR12899:SF3">
    <property type="entry name" value="LARGE RIBOSOMAL SUBUNIT PROTEIN UL18M"/>
    <property type="match status" value="1"/>
</dbReference>
<dbReference type="Pfam" id="PF00861">
    <property type="entry name" value="Ribosomal_L18p"/>
    <property type="match status" value="1"/>
</dbReference>
<dbReference type="SUPFAM" id="SSF53137">
    <property type="entry name" value="Translational machinery components"/>
    <property type="match status" value="1"/>
</dbReference>
<gene>
    <name evidence="1" type="primary">rplR</name>
    <name type="ordered locus">UPA3_0255</name>
</gene>
<organism>
    <name type="scientific">Ureaplasma parvum serovar 3 (strain ATCC 27815 / 27 / NCTC 11736)</name>
    <dbReference type="NCBI Taxonomy" id="505682"/>
    <lineage>
        <taxon>Bacteria</taxon>
        <taxon>Bacillati</taxon>
        <taxon>Mycoplasmatota</taxon>
        <taxon>Mycoplasmoidales</taxon>
        <taxon>Mycoplasmoidaceae</taxon>
        <taxon>Ureaplasma</taxon>
    </lineage>
</organism>
<protein>
    <recommendedName>
        <fullName evidence="1">Large ribosomal subunit protein uL18</fullName>
    </recommendedName>
    <alternativeName>
        <fullName evidence="2">50S ribosomal protein L18</fullName>
    </alternativeName>
</protein>